<keyword id="KW-0156">Chromatin regulator</keyword>
<keyword id="KW-0217">Developmental protein</keyword>
<keyword id="KW-0539">Nucleus</keyword>
<keyword id="KW-0611">Plant defense</keyword>
<keyword id="KW-1185">Reference proteome</keyword>
<feature type="chain" id="PRO_0000320536" description="Actin-related protein 6">
    <location>
        <begin position="1"/>
        <end position="429"/>
    </location>
</feature>
<feature type="region of interest" description="Disordered" evidence="3">
    <location>
        <begin position="272"/>
        <end position="293"/>
    </location>
</feature>
<feature type="compositionally biased region" description="Basic and acidic residues" evidence="3">
    <location>
        <begin position="275"/>
        <end position="293"/>
    </location>
</feature>
<feature type="sequence conflict" description="In Ref. 6; AK068395." evidence="4" ref="6">
    <original>G</original>
    <variation>W</variation>
    <location>
        <position position="326"/>
    </location>
</feature>
<protein>
    <recommendedName>
        <fullName>Actin-related protein 6</fullName>
    </recommendedName>
</protein>
<reference key="1">
    <citation type="journal article" date="2002" name="Nature">
        <title>The genome sequence and structure of rice chromosome 1.</title>
        <authorList>
            <person name="Sasaki T."/>
            <person name="Matsumoto T."/>
            <person name="Yamamoto K."/>
            <person name="Sakata K."/>
            <person name="Baba T."/>
            <person name="Katayose Y."/>
            <person name="Wu J."/>
            <person name="Niimura Y."/>
            <person name="Cheng Z."/>
            <person name="Nagamura Y."/>
            <person name="Antonio B.A."/>
            <person name="Kanamori H."/>
            <person name="Hosokawa S."/>
            <person name="Masukawa M."/>
            <person name="Arikawa K."/>
            <person name="Chiden Y."/>
            <person name="Hayashi M."/>
            <person name="Okamoto M."/>
            <person name="Ando T."/>
            <person name="Aoki H."/>
            <person name="Arita K."/>
            <person name="Hamada M."/>
            <person name="Harada C."/>
            <person name="Hijishita S."/>
            <person name="Honda M."/>
            <person name="Ichikawa Y."/>
            <person name="Idonuma A."/>
            <person name="Iijima M."/>
            <person name="Ikeda M."/>
            <person name="Ikeno M."/>
            <person name="Ito S."/>
            <person name="Ito T."/>
            <person name="Ito Y."/>
            <person name="Ito Y."/>
            <person name="Iwabuchi A."/>
            <person name="Kamiya K."/>
            <person name="Karasawa W."/>
            <person name="Katagiri S."/>
            <person name="Kikuta A."/>
            <person name="Kobayashi N."/>
            <person name="Kono I."/>
            <person name="Machita K."/>
            <person name="Maehara T."/>
            <person name="Mizuno H."/>
            <person name="Mizubayashi T."/>
            <person name="Mukai Y."/>
            <person name="Nagasaki H."/>
            <person name="Nakashima M."/>
            <person name="Nakama Y."/>
            <person name="Nakamichi Y."/>
            <person name="Nakamura M."/>
            <person name="Namiki N."/>
            <person name="Negishi M."/>
            <person name="Ohta I."/>
            <person name="Ono N."/>
            <person name="Saji S."/>
            <person name="Sakai K."/>
            <person name="Shibata M."/>
            <person name="Shimokawa T."/>
            <person name="Shomura A."/>
            <person name="Song J."/>
            <person name="Takazaki Y."/>
            <person name="Terasawa K."/>
            <person name="Tsuji K."/>
            <person name="Waki K."/>
            <person name="Yamagata H."/>
            <person name="Yamane H."/>
            <person name="Yoshiki S."/>
            <person name="Yoshihara R."/>
            <person name="Yukawa K."/>
            <person name="Zhong H."/>
            <person name="Iwama H."/>
            <person name="Endo T."/>
            <person name="Ito H."/>
            <person name="Hahn J.H."/>
            <person name="Kim H.-I."/>
            <person name="Eun M.-Y."/>
            <person name="Yano M."/>
            <person name="Jiang J."/>
            <person name="Gojobori T."/>
        </authorList>
    </citation>
    <scope>NUCLEOTIDE SEQUENCE [LARGE SCALE GENOMIC DNA]</scope>
    <source>
        <strain>cv. Nipponbare</strain>
    </source>
</reference>
<reference key="2">
    <citation type="journal article" date="2005" name="Nature">
        <title>The map-based sequence of the rice genome.</title>
        <authorList>
            <consortium name="International rice genome sequencing project (IRGSP)"/>
        </authorList>
    </citation>
    <scope>NUCLEOTIDE SEQUENCE [LARGE SCALE GENOMIC DNA]</scope>
    <source>
        <strain>cv. Nipponbare</strain>
    </source>
</reference>
<reference key="3">
    <citation type="journal article" date="2008" name="Nucleic Acids Res.">
        <title>The rice annotation project database (RAP-DB): 2008 update.</title>
        <authorList>
            <consortium name="The rice annotation project (RAP)"/>
        </authorList>
    </citation>
    <scope>GENOME REANNOTATION</scope>
    <source>
        <strain>cv. Nipponbare</strain>
    </source>
</reference>
<reference key="4">
    <citation type="journal article" date="2013" name="Rice">
        <title>Improvement of the Oryza sativa Nipponbare reference genome using next generation sequence and optical map data.</title>
        <authorList>
            <person name="Kawahara Y."/>
            <person name="de la Bastide M."/>
            <person name="Hamilton J.P."/>
            <person name="Kanamori H."/>
            <person name="McCombie W.R."/>
            <person name="Ouyang S."/>
            <person name="Schwartz D.C."/>
            <person name="Tanaka T."/>
            <person name="Wu J."/>
            <person name="Zhou S."/>
            <person name="Childs K.L."/>
            <person name="Davidson R.M."/>
            <person name="Lin H."/>
            <person name="Quesada-Ocampo L."/>
            <person name="Vaillancourt B."/>
            <person name="Sakai H."/>
            <person name="Lee S.S."/>
            <person name="Kim J."/>
            <person name="Numa H."/>
            <person name="Itoh T."/>
            <person name="Buell C.R."/>
            <person name="Matsumoto T."/>
        </authorList>
    </citation>
    <scope>GENOME REANNOTATION</scope>
    <source>
        <strain>cv. Nipponbare</strain>
    </source>
</reference>
<reference key="5">
    <citation type="journal article" date="2005" name="PLoS Biol.">
        <title>The genomes of Oryza sativa: a history of duplications.</title>
        <authorList>
            <person name="Yu J."/>
            <person name="Wang J."/>
            <person name="Lin W."/>
            <person name="Li S."/>
            <person name="Li H."/>
            <person name="Zhou J."/>
            <person name="Ni P."/>
            <person name="Dong W."/>
            <person name="Hu S."/>
            <person name="Zeng C."/>
            <person name="Zhang J."/>
            <person name="Zhang Y."/>
            <person name="Li R."/>
            <person name="Xu Z."/>
            <person name="Li S."/>
            <person name="Li X."/>
            <person name="Zheng H."/>
            <person name="Cong L."/>
            <person name="Lin L."/>
            <person name="Yin J."/>
            <person name="Geng J."/>
            <person name="Li G."/>
            <person name="Shi J."/>
            <person name="Liu J."/>
            <person name="Lv H."/>
            <person name="Li J."/>
            <person name="Wang J."/>
            <person name="Deng Y."/>
            <person name="Ran L."/>
            <person name="Shi X."/>
            <person name="Wang X."/>
            <person name="Wu Q."/>
            <person name="Li C."/>
            <person name="Ren X."/>
            <person name="Wang J."/>
            <person name="Wang X."/>
            <person name="Li D."/>
            <person name="Liu D."/>
            <person name="Zhang X."/>
            <person name="Ji Z."/>
            <person name="Zhao W."/>
            <person name="Sun Y."/>
            <person name="Zhang Z."/>
            <person name="Bao J."/>
            <person name="Han Y."/>
            <person name="Dong L."/>
            <person name="Ji J."/>
            <person name="Chen P."/>
            <person name="Wu S."/>
            <person name="Liu J."/>
            <person name="Xiao Y."/>
            <person name="Bu D."/>
            <person name="Tan J."/>
            <person name="Yang L."/>
            <person name="Ye C."/>
            <person name="Zhang J."/>
            <person name="Xu J."/>
            <person name="Zhou Y."/>
            <person name="Yu Y."/>
            <person name="Zhang B."/>
            <person name="Zhuang S."/>
            <person name="Wei H."/>
            <person name="Liu B."/>
            <person name="Lei M."/>
            <person name="Yu H."/>
            <person name="Li Y."/>
            <person name="Xu H."/>
            <person name="Wei S."/>
            <person name="He X."/>
            <person name="Fang L."/>
            <person name="Zhang Z."/>
            <person name="Zhang Y."/>
            <person name="Huang X."/>
            <person name="Su Z."/>
            <person name="Tong W."/>
            <person name="Li J."/>
            <person name="Tong Z."/>
            <person name="Li S."/>
            <person name="Ye J."/>
            <person name="Wang L."/>
            <person name="Fang L."/>
            <person name="Lei T."/>
            <person name="Chen C.-S."/>
            <person name="Chen H.-C."/>
            <person name="Xu Z."/>
            <person name="Li H."/>
            <person name="Huang H."/>
            <person name="Zhang F."/>
            <person name="Xu H."/>
            <person name="Li N."/>
            <person name="Zhao C."/>
            <person name="Li S."/>
            <person name="Dong L."/>
            <person name="Huang Y."/>
            <person name="Li L."/>
            <person name="Xi Y."/>
            <person name="Qi Q."/>
            <person name="Li W."/>
            <person name="Zhang B."/>
            <person name="Hu W."/>
            <person name="Zhang Y."/>
            <person name="Tian X."/>
            <person name="Jiao Y."/>
            <person name="Liang X."/>
            <person name="Jin J."/>
            <person name="Gao L."/>
            <person name="Zheng W."/>
            <person name="Hao B."/>
            <person name="Liu S.-M."/>
            <person name="Wang W."/>
            <person name="Yuan L."/>
            <person name="Cao M."/>
            <person name="McDermott J."/>
            <person name="Samudrala R."/>
            <person name="Wang J."/>
            <person name="Wong G.K.-S."/>
            <person name="Yang H."/>
        </authorList>
    </citation>
    <scope>NUCLEOTIDE SEQUENCE [LARGE SCALE GENOMIC DNA]</scope>
    <source>
        <strain>cv. Nipponbare</strain>
    </source>
</reference>
<reference key="6">
    <citation type="journal article" date="2003" name="Science">
        <title>Collection, mapping, and annotation of over 28,000 cDNA clones from japonica rice.</title>
        <authorList>
            <consortium name="The rice full-length cDNA consortium"/>
        </authorList>
    </citation>
    <scope>NUCLEOTIDE SEQUENCE [LARGE SCALE MRNA]</scope>
    <source>
        <strain>cv. Nipponbare</strain>
    </source>
</reference>
<reference key="7">
    <citation type="journal article" date="2004" name="Trends Plant Sci.">
        <title>Plant actin-related proteins.</title>
        <authorList>
            <person name="Kandasamy M.K."/>
            <person name="Deal R.B."/>
            <person name="McKinney E.C."/>
            <person name="Meagher R.B."/>
        </authorList>
    </citation>
    <scope>REVIEW</scope>
    <scope>GENE FAMILY</scope>
    <scope>NOMENCLATURE</scope>
</reference>
<dbReference type="EMBL" id="AP001073">
    <property type="protein sequence ID" value="BAD81174.1"/>
    <property type="molecule type" value="Genomic_DNA"/>
</dbReference>
<dbReference type="EMBL" id="AP008207">
    <property type="protein sequence ID" value="BAF04614.1"/>
    <property type="molecule type" value="Genomic_DNA"/>
</dbReference>
<dbReference type="EMBL" id="AP014957">
    <property type="protein sequence ID" value="BAS71497.1"/>
    <property type="molecule type" value="Genomic_DNA"/>
</dbReference>
<dbReference type="EMBL" id="CM000138">
    <property type="protein sequence ID" value="EAZ11376.1"/>
    <property type="molecule type" value="Genomic_DNA"/>
</dbReference>
<dbReference type="EMBL" id="AK068395">
    <property type="status" value="NOT_ANNOTATED_CDS"/>
    <property type="molecule type" value="mRNA"/>
</dbReference>
<dbReference type="RefSeq" id="XP_015622329.1">
    <property type="nucleotide sequence ID" value="XM_015766843.1"/>
</dbReference>
<dbReference type="RefSeq" id="XP_015622330.1">
    <property type="nucleotide sequence ID" value="XM_015766844.1"/>
</dbReference>
<dbReference type="RefSeq" id="XP_015622331.1">
    <property type="nucleotide sequence ID" value="XM_015766845.1"/>
</dbReference>
<dbReference type="RefSeq" id="XP_015622333.1">
    <property type="nucleotide sequence ID" value="XM_015766847.1"/>
</dbReference>
<dbReference type="RefSeq" id="XP_015622334.1">
    <property type="nucleotide sequence ID" value="XM_015766848.1"/>
</dbReference>
<dbReference type="SMR" id="Q5NBI2"/>
<dbReference type="FunCoup" id="Q5NBI2">
    <property type="interactions" value="2292"/>
</dbReference>
<dbReference type="STRING" id="39947.Q5NBI2"/>
<dbReference type="PaxDb" id="39947-Q5NBI2"/>
<dbReference type="EnsemblPlants" id="Os01t0269900-01">
    <property type="protein sequence ID" value="Os01t0269900-01"/>
    <property type="gene ID" value="Os01g0269900"/>
</dbReference>
<dbReference type="GeneID" id="4326270"/>
<dbReference type="Gramene" id="Os01t0269900-01">
    <property type="protein sequence ID" value="Os01t0269900-01"/>
    <property type="gene ID" value="Os01g0269900"/>
</dbReference>
<dbReference type="KEGG" id="dosa:Os01g0269900"/>
<dbReference type="KEGG" id="osa:4326270"/>
<dbReference type="eggNOG" id="KOG0676">
    <property type="taxonomic scope" value="Eukaryota"/>
</dbReference>
<dbReference type="HOGENOM" id="CLU_027965_1_1_1"/>
<dbReference type="InParanoid" id="Q5NBI2"/>
<dbReference type="OMA" id="FFEEYEC"/>
<dbReference type="OrthoDB" id="6220758at2759"/>
<dbReference type="Proteomes" id="UP000000763">
    <property type="component" value="Chromosome 1"/>
</dbReference>
<dbReference type="Proteomes" id="UP000007752">
    <property type="component" value="Chromosome 1"/>
</dbReference>
<dbReference type="Proteomes" id="UP000059680">
    <property type="component" value="Chromosome 1"/>
</dbReference>
<dbReference type="GO" id="GO:0000812">
    <property type="term" value="C:Swr1 complex"/>
    <property type="evidence" value="ECO:0000318"/>
    <property type="project" value="GO_Central"/>
</dbReference>
<dbReference type="GO" id="GO:0031491">
    <property type="term" value="F:nucleosome binding"/>
    <property type="evidence" value="ECO:0000318"/>
    <property type="project" value="GO_Central"/>
</dbReference>
<dbReference type="GO" id="GO:0051301">
    <property type="term" value="P:cell division"/>
    <property type="evidence" value="ECO:0007669"/>
    <property type="project" value="EnsemblPlants"/>
</dbReference>
<dbReference type="GO" id="GO:0006338">
    <property type="term" value="P:chromatin remodeling"/>
    <property type="evidence" value="ECO:0007669"/>
    <property type="project" value="EnsemblPlants"/>
</dbReference>
<dbReference type="GO" id="GO:0006952">
    <property type="term" value="P:defense response"/>
    <property type="evidence" value="ECO:0007669"/>
    <property type="project" value="UniProtKB-KW"/>
</dbReference>
<dbReference type="GO" id="GO:0009910">
    <property type="term" value="P:negative regulation of flower development"/>
    <property type="evidence" value="ECO:0007669"/>
    <property type="project" value="EnsemblPlants"/>
</dbReference>
<dbReference type="GO" id="GO:0006355">
    <property type="term" value="P:regulation of DNA-templated transcription"/>
    <property type="evidence" value="ECO:0007669"/>
    <property type="project" value="EnsemblPlants"/>
</dbReference>
<dbReference type="GO" id="GO:0006970">
    <property type="term" value="P:response to osmotic stress"/>
    <property type="evidence" value="ECO:0007669"/>
    <property type="project" value="EnsemblPlants"/>
</dbReference>
<dbReference type="GO" id="GO:0009266">
    <property type="term" value="P:response to temperature stimulus"/>
    <property type="evidence" value="ECO:0007669"/>
    <property type="project" value="EnsemblPlants"/>
</dbReference>
<dbReference type="GO" id="GO:0009845">
    <property type="term" value="P:seed germination"/>
    <property type="evidence" value="ECO:0007669"/>
    <property type="project" value="EnsemblPlants"/>
</dbReference>
<dbReference type="CDD" id="cd10210">
    <property type="entry name" value="ASKHA_NBD_Arp6"/>
    <property type="match status" value="1"/>
</dbReference>
<dbReference type="FunFam" id="2.30.36.70:FF:000006">
    <property type="entry name" value="Actin-related protein 6"/>
    <property type="match status" value="1"/>
</dbReference>
<dbReference type="FunFam" id="3.30.420.40:FF:000187">
    <property type="entry name" value="Actin-related protein 6"/>
    <property type="match status" value="1"/>
</dbReference>
<dbReference type="FunFam" id="3.90.640.10:FF:000041">
    <property type="entry name" value="Actin-related protein 6"/>
    <property type="match status" value="1"/>
</dbReference>
<dbReference type="FunFam" id="3.90.640.10:FF:000057">
    <property type="entry name" value="Actin-related protein 6"/>
    <property type="match status" value="1"/>
</dbReference>
<dbReference type="FunFam" id="3.30.420.40:FF:000048">
    <property type="entry name" value="ARP5 actin-related protein 5 homolog"/>
    <property type="match status" value="1"/>
</dbReference>
<dbReference type="FunFam" id="3.30.420.40:FF:000058">
    <property type="entry name" value="Putative actin-related protein 5"/>
    <property type="match status" value="1"/>
</dbReference>
<dbReference type="Gene3D" id="3.30.420.40">
    <property type="match status" value="4"/>
</dbReference>
<dbReference type="Gene3D" id="2.30.36.70">
    <property type="entry name" value="Actin, Chain A, domain 2"/>
    <property type="match status" value="1"/>
</dbReference>
<dbReference type="Gene3D" id="3.90.640.10">
    <property type="entry name" value="Actin, Chain A, domain 4"/>
    <property type="match status" value="2"/>
</dbReference>
<dbReference type="InterPro" id="IPR004000">
    <property type="entry name" value="Actin"/>
</dbReference>
<dbReference type="InterPro" id="IPR043129">
    <property type="entry name" value="ATPase_NBD"/>
</dbReference>
<dbReference type="PANTHER" id="PTHR11937">
    <property type="entry name" value="ACTIN"/>
    <property type="match status" value="1"/>
</dbReference>
<dbReference type="Pfam" id="PF00022">
    <property type="entry name" value="Actin"/>
    <property type="match status" value="1"/>
</dbReference>
<dbReference type="SMART" id="SM00268">
    <property type="entry name" value="ACTIN"/>
    <property type="match status" value="1"/>
</dbReference>
<dbReference type="SUPFAM" id="SSF53067">
    <property type="entry name" value="Actin-like ATPase domain"/>
    <property type="match status" value="2"/>
</dbReference>
<comment type="function">
    <text evidence="1">Component of the SWR1 complex which mediates the ATP-dependent exchange of histone H2A for the H2A variant H2A.F/Z leading to transcriptional regulation of selected genes by chromatin remodeling. Involved in several developmental processes. May be involved in the regulation of pathogenesis-related proteins (PRs) (By similarity).</text>
</comment>
<comment type="subunit">
    <text evidence="1">Component of the SWR1 chromatin-remodeling complex.</text>
</comment>
<comment type="subcellular location">
    <subcellularLocation>
        <location evidence="2">Nucleus</location>
    </subcellularLocation>
</comment>
<comment type="similarity">
    <text evidence="4">Belongs to the actin family. ARP6 subfamily.</text>
</comment>
<sequence>MTGGSGVVVLDNGGGLLKAGFGGDMNPTAVVPNCMAKPPGSKKWLVADQLQAQDVDVTGMTLRRPIDRGYLINQEVQREVWERVIRNLLQVDPNNSSLLLVEPQFNPPALQHATDELVFEELGFKSLCVADAPSLVHLYEASRQPSLFRAQCSLVVDCGFSFTHASPVLQNFTLNYAVRRMDLGGKALTNYLKELISYRSLNVMDETLLIDDAKEKLCFVSLDVPGDLRLARLSSNDNPFRCSYILPDGITYKKGFVKDLDEACRYSSLPANGESVRKDSSDSDRSKFEDKKKPELSQNEFVLTNERFLVPEMLFHPIDLGMNQAGLAECIVRAIQACHPHLQPVLFERIILTGGSTLFPRFTERLEKELRPLVPDDYQVKIIAQEDPILGAWRGGSLLAHRPDFESMCITKSEYEEMGSMRCRRRFFH</sequence>
<name>ARP6_ORYSJ</name>
<accession>Q5NBI2</accession>
<accession>A0A0N7KCQ8</accession>
<evidence type="ECO:0000250" key="1"/>
<evidence type="ECO:0000250" key="2">
    <source>
        <dbReference type="UniProtKB" id="Q8LGE3"/>
    </source>
</evidence>
<evidence type="ECO:0000256" key="3">
    <source>
        <dbReference type="SAM" id="MobiDB-lite"/>
    </source>
</evidence>
<evidence type="ECO:0000305" key="4"/>
<organism>
    <name type="scientific">Oryza sativa subsp. japonica</name>
    <name type="common">Rice</name>
    <dbReference type="NCBI Taxonomy" id="39947"/>
    <lineage>
        <taxon>Eukaryota</taxon>
        <taxon>Viridiplantae</taxon>
        <taxon>Streptophyta</taxon>
        <taxon>Embryophyta</taxon>
        <taxon>Tracheophyta</taxon>
        <taxon>Spermatophyta</taxon>
        <taxon>Magnoliopsida</taxon>
        <taxon>Liliopsida</taxon>
        <taxon>Poales</taxon>
        <taxon>Poaceae</taxon>
        <taxon>BOP clade</taxon>
        <taxon>Oryzoideae</taxon>
        <taxon>Oryzeae</taxon>
        <taxon>Oryzinae</taxon>
        <taxon>Oryza</taxon>
        <taxon>Oryza sativa</taxon>
    </lineage>
</organism>
<gene>
    <name type="primary">ARP6</name>
    <name type="ordered locus">Os01g0269900</name>
    <name type="ordered locus">LOC_Os01g16414</name>
    <name type="ORF">OsJ_001201</name>
    <name type="ORF">P0667A10.19</name>
</gene>
<proteinExistence type="evidence at transcript level"/>